<organism>
    <name type="scientific">Yersinia pestis bv. Antiqua (strain Antiqua)</name>
    <dbReference type="NCBI Taxonomy" id="360102"/>
    <lineage>
        <taxon>Bacteria</taxon>
        <taxon>Pseudomonadati</taxon>
        <taxon>Pseudomonadota</taxon>
        <taxon>Gammaproteobacteria</taxon>
        <taxon>Enterobacterales</taxon>
        <taxon>Yersiniaceae</taxon>
        <taxon>Yersinia</taxon>
    </lineage>
</organism>
<gene>
    <name evidence="2" type="primary">mutM</name>
    <name evidence="2" type="synonym">fpg</name>
    <name type="ordered locus">YPA_3490</name>
</gene>
<evidence type="ECO:0000250" key="1"/>
<evidence type="ECO:0000255" key="2">
    <source>
        <dbReference type="HAMAP-Rule" id="MF_00103"/>
    </source>
</evidence>
<feature type="initiator methionine" description="Removed" evidence="1">
    <location>
        <position position="1"/>
    </location>
</feature>
<feature type="chain" id="PRO_1000008792" description="Formamidopyrimidine-DNA glycosylase">
    <location>
        <begin position="2"/>
        <end position="269"/>
    </location>
</feature>
<feature type="zinc finger region" description="FPG-type" evidence="2">
    <location>
        <begin position="235"/>
        <end position="269"/>
    </location>
</feature>
<feature type="active site" description="Schiff-base intermediate with DNA" evidence="2">
    <location>
        <position position="2"/>
    </location>
</feature>
<feature type="active site" description="Proton donor" evidence="2">
    <location>
        <position position="3"/>
    </location>
</feature>
<feature type="active site" description="Proton donor; for beta-elimination activity" evidence="2">
    <location>
        <position position="57"/>
    </location>
</feature>
<feature type="active site" description="Proton donor; for delta-elimination activity" evidence="2">
    <location>
        <position position="259"/>
    </location>
</feature>
<feature type="binding site" evidence="2">
    <location>
        <position position="90"/>
    </location>
    <ligand>
        <name>DNA</name>
        <dbReference type="ChEBI" id="CHEBI:16991"/>
    </ligand>
</feature>
<feature type="binding site" evidence="2">
    <location>
        <position position="109"/>
    </location>
    <ligand>
        <name>DNA</name>
        <dbReference type="ChEBI" id="CHEBI:16991"/>
    </ligand>
</feature>
<feature type="binding site" evidence="2">
    <location>
        <position position="150"/>
    </location>
    <ligand>
        <name>DNA</name>
        <dbReference type="ChEBI" id="CHEBI:16991"/>
    </ligand>
</feature>
<sequence length="269" mass="30111">MPELPEVETSRRGIEPYLVGQTILYAVVRNARLRWPVSDEILTLSDQPVLSVQRRAKYLLLELPKGWIIIHLGMSGSLRVLSEETAAEKHDHVDLVVSNGKILRYTDPRRFGAWLWAKDLETSNVLAHLGPEPLSDEFTAQYLFDKSRNKRTLIKPWLMDNKVVVGVGNIYASESLFAAGILPDRAAGSLTDAESVLLVATIKAVLLHSIEQGGTTLRDFLQSDGKPGYFAQELQVYGRAGEPCRQCGHPIEIAKHGQRSTFFCRHCQH</sequence>
<accession>Q1C270</accession>
<protein>
    <recommendedName>
        <fullName evidence="2">Formamidopyrimidine-DNA glycosylase</fullName>
        <shortName evidence="2">Fapy-DNA glycosylase</shortName>
        <ecNumber evidence="2">3.2.2.23</ecNumber>
    </recommendedName>
    <alternativeName>
        <fullName evidence="2">DNA-(apurinic or apyrimidinic site) lyase MutM</fullName>
        <shortName evidence="2">AP lyase MutM</shortName>
        <ecNumber evidence="2">4.2.99.18</ecNumber>
    </alternativeName>
</protein>
<dbReference type="EC" id="3.2.2.23" evidence="2"/>
<dbReference type="EC" id="4.2.99.18" evidence="2"/>
<dbReference type="EMBL" id="CP000308">
    <property type="protein sequence ID" value="ABG15452.1"/>
    <property type="molecule type" value="Genomic_DNA"/>
</dbReference>
<dbReference type="RefSeq" id="WP_002208989.1">
    <property type="nucleotide sequence ID" value="NZ_CP009906.1"/>
</dbReference>
<dbReference type="SMR" id="Q1C270"/>
<dbReference type="GeneID" id="57974538"/>
<dbReference type="KEGG" id="ypa:YPA_3490"/>
<dbReference type="Proteomes" id="UP000001971">
    <property type="component" value="Chromosome"/>
</dbReference>
<dbReference type="GO" id="GO:0034039">
    <property type="term" value="F:8-oxo-7,8-dihydroguanine DNA N-glycosylase activity"/>
    <property type="evidence" value="ECO:0007669"/>
    <property type="project" value="TreeGrafter"/>
</dbReference>
<dbReference type="GO" id="GO:0140078">
    <property type="term" value="F:class I DNA-(apurinic or apyrimidinic site) endonuclease activity"/>
    <property type="evidence" value="ECO:0007669"/>
    <property type="project" value="UniProtKB-EC"/>
</dbReference>
<dbReference type="GO" id="GO:0003684">
    <property type="term" value="F:damaged DNA binding"/>
    <property type="evidence" value="ECO:0007669"/>
    <property type="project" value="InterPro"/>
</dbReference>
<dbReference type="GO" id="GO:0008270">
    <property type="term" value="F:zinc ion binding"/>
    <property type="evidence" value="ECO:0007669"/>
    <property type="project" value="UniProtKB-UniRule"/>
</dbReference>
<dbReference type="GO" id="GO:0006284">
    <property type="term" value="P:base-excision repair"/>
    <property type="evidence" value="ECO:0007669"/>
    <property type="project" value="InterPro"/>
</dbReference>
<dbReference type="CDD" id="cd08966">
    <property type="entry name" value="EcFpg-like_N"/>
    <property type="match status" value="1"/>
</dbReference>
<dbReference type="FunFam" id="1.10.8.50:FF:000003">
    <property type="entry name" value="Formamidopyrimidine-DNA glycosylase"/>
    <property type="match status" value="1"/>
</dbReference>
<dbReference type="FunFam" id="3.20.190.10:FF:000001">
    <property type="entry name" value="Formamidopyrimidine-DNA glycosylase"/>
    <property type="match status" value="1"/>
</dbReference>
<dbReference type="Gene3D" id="1.10.8.50">
    <property type="match status" value="1"/>
</dbReference>
<dbReference type="Gene3D" id="3.20.190.10">
    <property type="entry name" value="MutM-like, N-terminal"/>
    <property type="match status" value="1"/>
</dbReference>
<dbReference type="HAMAP" id="MF_00103">
    <property type="entry name" value="Fapy_DNA_glycosyl"/>
    <property type="match status" value="1"/>
</dbReference>
<dbReference type="InterPro" id="IPR015886">
    <property type="entry name" value="DNA_glyclase/AP_lyase_DNA-bd"/>
</dbReference>
<dbReference type="InterPro" id="IPR015887">
    <property type="entry name" value="DNA_glyclase_Znf_dom_DNA_BS"/>
</dbReference>
<dbReference type="InterPro" id="IPR020629">
    <property type="entry name" value="Formamido-pyr_DNA_Glyclase"/>
</dbReference>
<dbReference type="InterPro" id="IPR012319">
    <property type="entry name" value="FPG_cat"/>
</dbReference>
<dbReference type="InterPro" id="IPR035937">
    <property type="entry name" value="MutM-like_N-ter"/>
</dbReference>
<dbReference type="InterPro" id="IPR010979">
    <property type="entry name" value="Ribosomal_uS13-like_H2TH"/>
</dbReference>
<dbReference type="InterPro" id="IPR000214">
    <property type="entry name" value="Znf_DNA_glyclase/AP_lyase"/>
</dbReference>
<dbReference type="InterPro" id="IPR010663">
    <property type="entry name" value="Znf_FPG/IleRS"/>
</dbReference>
<dbReference type="NCBIfam" id="TIGR00577">
    <property type="entry name" value="fpg"/>
    <property type="match status" value="1"/>
</dbReference>
<dbReference type="NCBIfam" id="NF002211">
    <property type="entry name" value="PRK01103.1"/>
    <property type="match status" value="1"/>
</dbReference>
<dbReference type="PANTHER" id="PTHR22993">
    <property type="entry name" value="FORMAMIDOPYRIMIDINE-DNA GLYCOSYLASE"/>
    <property type="match status" value="1"/>
</dbReference>
<dbReference type="PANTHER" id="PTHR22993:SF9">
    <property type="entry name" value="FORMAMIDOPYRIMIDINE-DNA GLYCOSYLASE"/>
    <property type="match status" value="1"/>
</dbReference>
<dbReference type="Pfam" id="PF01149">
    <property type="entry name" value="Fapy_DNA_glyco"/>
    <property type="match status" value="1"/>
</dbReference>
<dbReference type="Pfam" id="PF06831">
    <property type="entry name" value="H2TH"/>
    <property type="match status" value="1"/>
</dbReference>
<dbReference type="Pfam" id="PF06827">
    <property type="entry name" value="zf-FPG_IleRS"/>
    <property type="match status" value="1"/>
</dbReference>
<dbReference type="SMART" id="SM00898">
    <property type="entry name" value="Fapy_DNA_glyco"/>
    <property type="match status" value="1"/>
</dbReference>
<dbReference type="SMART" id="SM01232">
    <property type="entry name" value="H2TH"/>
    <property type="match status" value="1"/>
</dbReference>
<dbReference type="SUPFAM" id="SSF57716">
    <property type="entry name" value="Glucocorticoid receptor-like (DNA-binding domain)"/>
    <property type="match status" value="1"/>
</dbReference>
<dbReference type="SUPFAM" id="SSF81624">
    <property type="entry name" value="N-terminal domain of MutM-like DNA repair proteins"/>
    <property type="match status" value="1"/>
</dbReference>
<dbReference type="SUPFAM" id="SSF46946">
    <property type="entry name" value="S13-like H2TH domain"/>
    <property type="match status" value="1"/>
</dbReference>
<dbReference type="PROSITE" id="PS51068">
    <property type="entry name" value="FPG_CAT"/>
    <property type="match status" value="1"/>
</dbReference>
<dbReference type="PROSITE" id="PS01242">
    <property type="entry name" value="ZF_FPG_1"/>
    <property type="match status" value="1"/>
</dbReference>
<dbReference type="PROSITE" id="PS51066">
    <property type="entry name" value="ZF_FPG_2"/>
    <property type="match status" value="1"/>
</dbReference>
<reference key="1">
    <citation type="journal article" date="2006" name="J. Bacteriol.">
        <title>Complete genome sequence of Yersinia pestis strains Antiqua and Nepal516: evidence of gene reduction in an emerging pathogen.</title>
        <authorList>
            <person name="Chain P.S.G."/>
            <person name="Hu P."/>
            <person name="Malfatti S.A."/>
            <person name="Radnedge L."/>
            <person name="Larimer F."/>
            <person name="Vergez L.M."/>
            <person name="Worsham P."/>
            <person name="Chu M.C."/>
            <person name="Andersen G.L."/>
        </authorList>
    </citation>
    <scope>NUCLEOTIDE SEQUENCE [LARGE SCALE GENOMIC DNA]</scope>
    <source>
        <strain>Antiqua</strain>
    </source>
</reference>
<keyword id="KW-0227">DNA damage</keyword>
<keyword id="KW-0234">DNA repair</keyword>
<keyword id="KW-0238">DNA-binding</keyword>
<keyword id="KW-0326">Glycosidase</keyword>
<keyword id="KW-0378">Hydrolase</keyword>
<keyword id="KW-0456">Lyase</keyword>
<keyword id="KW-0479">Metal-binding</keyword>
<keyword id="KW-0511">Multifunctional enzyme</keyword>
<keyword id="KW-0862">Zinc</keyword>
<keyword id="KW-0863">Zinc-finger</keyword>
<proteinExistence type="inferred from homology"/>
<comment type="function">
    <text evidence="2">Involved in base excision repair of DNA damaged by oxidation or by mutagenic agents. Acts as a DNA glycosylase that recognizes and removes damaged bases. Has a preference for oxidized purines, such as 7,8-dihydro-8-oxoguanine (8-oxoG). Has AP (apurinic/apyrimidinic) lyase activity and introduces nicks in the DNA strand. Cleaves the DNA backbone by beta-delta elimination to generate a single-strand break at the site of the removed base with both 3'- and 5'-phosphates.</text>
</comment>
<comment type="catalytic activity">
    <reaction evidence="2">
        <text>Hydrolysis of DNA containing ring-opened 7-methylguanine residues, releasing 2,6-diamino-4-hydroxy-5-(N-methyl)formamidopyrimidine.</text>
        <dbReference type="EC" id="3.2.2.23"/>
    </reaction>
</comment>
<comment type="catalytic activity">
    <reaction evidence="2">
        <text>2'-deoxyribonucleotide-(2'-deoxyribose 5'-phosphate)-2'-deoxyribonucleotide-DNA = a 3'-end 2'-deoxyribonucleotide-(2,3-dehydro-2,3-deoxyribose 5'-phosphate)-DNA + a 5'-end 5'-phospho-2'-deoxyribonucleoside-DNA + H(+)</text>
        <dbReference type="Rhea" id="RHEA:66592"/>
        <dbReference type="Rhea" id="RHEA-COMP:13180"/>
        <dbReference type="Rhea" id="RHEA-COMP:16897"/>
        <dbReference type="Rhea" id="RHEA-COMP:17067"/>
        <dbReference type="ChEBI" id="CHEBI:15378"/>
        <dbReference type="ChEBI" id="CHEBI:136412"/>
        <dbReference type="ChEBI" id="CHEBI:157695"/>
        <dbReference type="ChEBI" id="CHEBI:167181"/>
        <dbReference type="EC" id="4.2.99.18"/>
    </reaction>
</comment>
<comment type="cofactor">
    <cofactor evidence="2">
        <name>Zn(2+)</name>
        <dbReference type="ChEBI" id="CHEBI:29105"/>
    </cofactor>
    <text evidence="2">Binds 1 zinc ion per subunit.</text>
</comment>
<comment type="subunit">
    <text evidence="2">Monomer.</text>
</comment>
<comment type="similarity">
    <text evidence="2">Belongs to the FPG family.</text>
</comment>
<name>FPG_YERPA</name>